<organism>
    <name type="scientific">Yersinia pestis bv. Antiqua (strain Antiqua)</name>
    <dbReference type="NCBI Taxonomy" id="360102"/>
    <lineage>
        <taxon>Bacteria</taxon>
        <taxon>Pseudomonadati</taxon>
        <taxon>Pseudomonadota</taxon>
        <taxon>Gammaproteobacteria</taxon>
        <taxon>Enterobacterales</taxon>
        <taxon>Yersiniaceae</taxon>
        <taxon>Yersinia</taxon>
    </lineage>
</organism>
<dbReference type="EC" id="3.5.1.88" evidence="1"/>
<dbReference type="EMBL" id="CP000308">
    <property type="protein sequence ID" value="ABG15193.1"/>
    <property type="molecule type" value="Genomic_DNA"/>
</dbReference>
<dbReference type="RefSeq" id="WP_002209021.1">
    <property type="nucleotide sequence ID" value="NZ_CP009906.1"/>
</dbReference>
<dbReference type="SMR" id="Q1C2X9"/>
<dbReference type="GeneID" id="57974362"/>
<dbReference type="KEGG" id="ypa:YPA_3231"/>
<dbReference type="Proteomes" id="UP000001971">
    <property type="component" value="Chromosome"/>
</dbReference>
<dbReference type="GO" id="GO:0046872">
    <property type="term" value="F:metal ion binding"/>
    <property type="evidence" value="ECO:0007669"/>
    <property type="project" value="UniProtKB-KW"/>
</dbReference>
<dbReference type="GO" id="GO:0042586">
    <property type="term" value="F:peptide deformylase activity"/>
    <property type="evidence" value="ECO:0007669"/>
    <property type="project" value="UniProtKB-UniRule"/>
</dbReference>
<dbReference type="GO" id="GO:0043686">
    <property type="term" value="P:co-translational protein modification"/>
    <property type="evidence" value="ECO:0007669"/>
    <property type="project" value="TreeGrafter"/>
</dbReference>
<dbReference type="GO" id="GO:0006412">
    <property type="term" value="P:translation"/>
    <property type="evidence" value="ECO:0007669"/>
    <property type="project" value="UniProtKB-UniRule"/>
</dbReference>
<dbReference type="CDD" id="cd00487">
    <property type="entry name" value="Pep_deformylase"/>
    <property type="match status" value="1"/>
</dbReference>
<dbReference type="FunFam" id="3.90.45.10:FF:000001">
    <property type="entry name" value="Peptide deformylase"/>
    <property type="match status" value="1"/>
</dbReference>
<dbReference type="Gene3D" id="3.90.45.10">
    <property type="entry name" value="Peptide deformylase"/>
    <property type="match status" value="1"/>
</dbReference>
<dbReference type="HAMAP" id="MF_00163">
    <property type="entry name" value="Pep_deformylase"/>
    <property type="match status" value="1"/>
</dbReference>
<dbReference type="InterPro" id="IPR023635">
    <property type="entry name" value="Peptide_deformylase"/>
</dbReference>
<dbReference type="InterPro" id="IPR036821">
    <property type="entry name" value="Peptide_deformylase_sf"/>
</dbReference>
<dbReference type="NCBIfam" id="TIGR00079">
    <property type="entry name" value="pept_deformyl"/>
    <property type="match status" value="1"/>
</dbReference>
<dbReference type="NCBIfam" id="NF001159">
    <property type="entry name" value="PRK00150.1-3"/>
    <property type="match status" value="1"/>
</dbReference>
<dbReference type="PANTHER" id="PTHR10458">
    <property type="entry name" value="PEPTIDE DEFORMYLASE"/>
    <property type="match status" value="1"/>
</dbReference>
<dbReference type="PANTHER" id="PTHR10458:SF21">
    <property type="entry name" value="PEPTIDE DEFORMYLASE"/>
    <property type="match status" value="1"/>
</dbReference>
<dbReference type="Pfam" id="PF01327">
    <property type="entry name" value="Pep_deformylase"/>
    <property type="match status" value="1"/>
</dbReference>
<dbReference type="PIRSF" id="PIRSF004749">
    <property type="entry name" value="Pep_def"/>
    <property type="match status" value="1"/>
</dbReference>
<dbReference type="PRINTS" id="PR01576">
    <property type="entry name" value="PDEFORMYLASE"/>
</dbReference>
<dbReference type="SUPFAM" id="SSF56420">
    <property type="entry name" value="Peptide deformylase"/>
    <property type="match status" value="1"/>
</dbReference>
<comment type="function">
    <text evidence="1">Removes the formyl group from the N-terminal Met of newly synthesized proteins. Requires at least a dipeptide for an efficient rate of reaction. N-terminal L-methionine is a prerequisite for activity but the enzyme has broad specificity at other positions.</text>
</comment>
<comment type="catalytic activity">
    <reaction evidence="1">
        <text>N-terminal N-formyl-L-methionyl-[peptide] + H2O = N-terminal L-methionyl-[peptide] + formate</text>
        <dbReference type="Rhea" id="RHEA:24420"/>
        <dbReference type="Rhea" id="RHEA-COMP:10639"/>
        <dbReference type="Rhea" id="RHEA-COMP:10640"/>
        <dbReference type="ChEBI" id="CHEBI:15377"/>
        <dbReference type="ChEBI" id="CHEBI:15740"/>
        <dbReference type="ChEBI" id="CHEBI:49298"/>
        <dbReference type="ChEBI" id="CHEBI:64731"/>
        <dbReference type="EC" id="3.5.1.88"/>
    </reaction>
</comment>
<comment type="cofactor">
    <cofactor evidence="1">
        <name>Fe(2+)</name>
        <dbReference type="ChEBI" id="CHEBI:29033"/>
    </cofactor>
    <text evidence="1">Binds 1 Fe(2+) ion.</text>
</comment>
<comment type="similarity">
    <text evidence="1">Belongs to the polypeptide deformylase family.</text>
</comment>
<keyword id="KW-0378">Hydrolase</keyword>
<keyword id="KW-0408">Iron</keyword>
<keyword id="KW-0479">Metal-binding</keyword>
<keyword id="KW-0648">Protein biosynthesis</keyword>
<gene>
    <name evidence="1" type="primary">def</name>
    <name type="ordered locus">YPA_3231</name>
</gene>
<sequence length="170" mass="19391">MSVLQVLHYPDERLRKIAAPVKEVNGEIQRIVDDMFETMYAEEGIGLAATQVDVHQQIIVIDISENRDQRLVLINPELLEKSGETGIEEGCLSIPEQRALVPRAEKVKIRALDRDGKPFELETDGLLAICIQHEMDHLIGKLFVDYLSPLKRQRIRQKLEKMAKLNARAN</sequence>
<proteinExistence type="inferred from homology"/>
<evidence type="ECO:0000255" key="1">
    <source>
        <dbReference type="HAMAP-Rule" id="MF_00163"/>
    </source>
</evidence>
<reference key="1">
    <citation type="journal article" date="2006" name="J. Bacteriol.">
        <title>Complete genome sequence of Yersinia pestis strains Antiqua and Nepal516: evidence of gene reduction in an emerging pathogen.</title>
        <authorList>
            <person name="Chain P.S.G."/>
            <person name="Hu P."/>
            <person name="Malfatti S.A."/>
            <person name="Radnedge L."/>
            <person name="Larimer F."/>
            <person name="Vergez L.M."/>
            <person name="Worsham P."/>
            <person name="Chu M.C."/>
            <person name="Andersen G.L."/>
        </authorList>
    </citation>
    <scope>NUCLEOTIDE SEQUENCE [LARGE SCALE GENOMIC DNA]</scope>
    <source>
        <strain>Antiqua</strain>
    </source>
</reference>
<feature type="chain" id="PRO_0000301127" description="Peptide deformylase">
    <location>
        <begin position="1"/>
        <end position="170"/>
    </location>
</feature>
<feature type="active site" evidence="1">
    <location>
        <position position="134"/>
    </location>
</feature>
<feature type="binding site" evidence="1">
    <location>
        <position position="91"/>
    </location>
    <ligand>
        <name>Fe cation</name>
        <dbReference type="ChEBI" id="CHEBI:24875"/>
    </ligand>
</feature>
<feature type="binding site" evidence="1">
    <location>
        <position position="133"/>
    </location>
    <ligand>
        <name>Fe cation</name>
        <dbReference type="ChEBI" id="CHEBI:24875"/>
    </ligand>
</feature>
<feature type="binding site" evidence="1">
    <location>
        <position position="137"/>
    </location>
    <ligand>
        <name>Fe cation</name>
        <dbReference type="ChEBI" id="CHEBI:24875"/>
    </ligand>
</feature>
<accession>Q1C2X9</accession>
<name>DEF_YERPA</name>
<protein>
    <recommendedName>
        <fullName evidence="1">Peptide deformylase</fullName>
        <shortName evidence="1">PDF</shortName>
        <ecNumber evidence="1">3.5.1.88</ecNumber>
    </recommendedName>
    <alternativeName>
        <fullName evidence="1">Polypeptide deformylase</fullName>
    </alternativeName>
</protein>